<name>SULF1_DROME</name>
<feature type="signal peptide" evidence="3">
    <location>
        <begin position="1"/>
        <end position="25"/>
    </location>
</feature>
<feature type="chain" id="PRO_0000033439" description="Extracellular sulfatase SULF-1 homolog">
    <location>
        <begin position="26"/>
        <end position="1114"/>
    </location>
</feature>
<feature type="region of interest" description="Disordered" evidence="4">
    <location>
        <begin position="466"/>
        <end position="504"/>
    </location>
</feature>
<feature type="region of interest" description="Disordered" evidence="4">
    <location>
        <begin position="781"/>
        <end position="812"/>
    </location>
</feature>
<feature type="region of interest" description="Disordered" evidence="4">
    <location>
        <begin position="876"/>
        <end position="901"/>
    </location>
</feature>
<feature type="region of interest" description="Disordered" evidence="4">
    <location>
        <begin position="1073"/>
        <end position="1114"/>
    </location>
</feature>
<feature type="compositionally biased region" description="Low complexity" evidence="4">
    <location>
        <begin position="466"/>
        <end position="479"/>
    </location>
</feature>
<feature type="compositionally biased region" description="Acidic residues" evidence="4">
    <location>
        <begin position="483"/>
        <end position="502"/>
    </location>
</feature>
<feature type="compositionally biased region" description="Basic and acidic residues" evidence="4">
    <location>
        <begin position="795"/>
        <end position="804"/>
    </location>
</feature>
<feature type="compositionally biased region" description="Basic and acidic residues" evidence="4">
    <location>
        <begin position="876"/>
        <end position="895"/>
    </location>
</feature>
<feature type="compositionally biased region" description="Polar residues" evidence="4">
    <location>
        <begin position="1095"/>
        <end position="1114"/>
    </location>
</feature>
<feature type="active site" description="Nucleophile" evidence="2">
    <location>
        <position position="98"/>
    </location>
</feature>
<feature type="binding site" evidence="1">
    <location>
        <position position="62"/>
    </location>
    <ligand>
        <name>Ca(2+)</name>
        <dbReference type="ChEBI" id="CHEBI:29108"/>
    </ligand>
</feature>
<feature type="binding site" evidence="1">
    <location>
        <position position="63"/>
    </location>
    <ligand>
        <name>Ca(2+)</name>
        <dbReference type="ChEBI" id="CHEBI:29108"/>
    </ligand>
</feature>
<feature type="binding site" description="via 3-oxoalanine" evidence="1">
    <location>
        <position position="98"/>
    </location>
    <ligand>
        <name>Ca(2+)</name>
        <dbReference type="ChEBI" id="CHEBI:29108"/>
    </ligand>
</feature>
<feature type="binding site" evidence="1">
    <location>
        <position position="327"/>
    </location>
    <ligand>
        <name>Ca(2+)</name>
        <dbReference type="ChEBI" id="CHEBI:29108"/>
    </ligand>
</feature>
<feature type="binding site" evidence="1">
    <location>
        <position position="328"/>
    </location>
    <ligand>
        <name>Ca(2+)</name>
        <dbReference type="ChEBI" id="CHEBI:29108"/>
    </ligand>
</feature>
<feature type="modified residue" description="3-oxoalanine (Cys)" evidence="2">
    <location>
        <position position="98"/>
    </location>
</feature>
<feature type="glycosylation site" description="N-linked (GlcNAc...) asparagine" evidence="3">
    <location>
        <position position="122"/>
    </location>
</feature>
<feature type="glycosylation site" description="N-linked (GlcNAc...) asparagine" evidence="3">
    <location>
        <position position="159"/>
    </location>
</feature>
<feature type="glycosylation site" description="N-linked (GlcNAc...) asparagine" evidence="3">
    <location>
        <position position="181"/>
    </location>
</feature>
<feature type="glycosylation site" description="N-linked (GlcNAc...) asparagine" evidence="3">
    <location>
        <position position="208"/>
    </location>
</feature>
<feature type="glycosylation site" description="N-linked (GlcNAc...) asparagine" evidence="3">
    <location>
        <position position="251"/>
    </location>
</feature>
<feature type="glycosylation site" description="N-linked (GlcNAc...) asparagine" evidence="3">
    <location>
        <position position="447"/>
    </location>
</feature>
<feature type="glycosylation site" description="N-linked (GlcNAc...) asparagine" evidence="3">
    <location>
        <position position="683"/>
    </location>
</feature>
<feature type="glycosylation site" description="N-linked (GlcNAc...) asparagine" evidence="3">
    <location>
        <position position="713"/>
    </location>
</feature>
<feature type="glycosylation site" description="N-linked (GlcNAc...) asparagine" evidence="5">
    <location>
        <position position="743"/>
    </location>
</feature>
<feature type="glycosylation site" description="N-linked (GlcNAc...) asparagine" evidence="3">
    <location>
        <position position="817"/>
    </location>
</feature>
<feature type="glycosylation site" description="N-linked (GlcNAc...) asparagine" evidence="3">
    <location>
        <position position="945"/>
    </location>
</feature>
<feature type="glycosylation site" description="N-linked (GlcNAc...) asparagine" evidence="3">
    <location>
        <position position="955"/>
    </location>
</feature>
<feature type="glycosylation site" description="N-linked (GlcNAc...) asparagine" evidence="3">
    <location>
        <position position="974"/>
    </location>
</feature>
<feature type="sequence conflict" description="In Ref. 4; AAF32278." evidence="6" ref="4">
    <original>SL</original>
    <variation>TR</variation>
    <location>
        <begin position="104"/>
        <end position="105"/>
    </location>
</feature>
<feature type="sequence conflict" description="In Ref. 3; AAM50312." evidence="6" ref="3">
    <original>E</original>
    <variation>A</variation>
    <location>
        <position position="655"/>
    </location>
</feature>
<dbReference type="EC" id="3.1.6.-"/>
<dbReference type="EMBL" id="AE014297">
    <property type="protein sequence ID" value="AAF55296.1"/>
    <property type="molecule type" value="Genomic_DNA"/>
</dbReference>
<dbReference type="EMBL" id="AY119658">
    <property type="protein sequence ID" value="AAM50312.1"/>
    <property type="status" value="ALT_INIT"/>
    <property type="molecule type" value="mRNA"/>
</dbReference>
<dbReference type="EMBL" id="AF211192">
    <property type="protein sequence ID" value="AAF32278.1"/>
    <property type="status" value="ALT_FRAME"/>
    <property type="molecule type" value="mRNA"/>
</dbReference>
<dbReference type="RefSeq" id="NP_001262626.1">
    <property type="nucleotide sequence ID" value="NM_001275697.1"/>
</dbReference>
<dbReference type="RefSeq" id="NP_001262627.1">
    <property type="nucleotide sequence ID" value="NM_001275698.1"/>
</dbReference>
<dbReference type="RefSeq" id="NP_524987.1">
    <property type="nucleotide sequence ID" value="NM_080248.3"/>
</dbReference>
<dbReference type="SMR" id="Q9VEX0"/>
<dbReference type="BioGRID" id="72725">
    <property type="interactions" value="12"/>
</dbReference>
<dbReference type="DIP" id="DIP-21001N"/>
<dbReference type="FunCoup" id="Q9VEX0">
    <property type="interactions" value="132"/>
</dbReference>
<dbReference type="IntAct" id="Q9VEX0">
    <property type="interactions" value="5"/>
</dbReference>
<dbReference type="STRING" id="7227.FBpp0306754"/>
<dbReference type="GlyCosmos" id="Q9VEX0">
    <property type="glycosylation" value="13 sites, No reported glycans"/>
</dbReference>
<dbReference type="GlyGen" id="Q9VEX0">
    <property type="glycosylation" value="14 sites"/>
</dbReference>
<dbReference type="iPTMnet" id="Q9VEX0"/>
<dbReference type="PaxDb" id="7227-FBpp0082725"/>
<dbReference type="EnsemblMetazoa" id="FBtr0083273">
    <property type="protein sequence ID" value="FBpp0082725"/>
    <property type="gene ID" value="FBgn0040271"/>
</dbReference>
<dbReference type="EnsemblMetazoa" id="FBtr0334699">
    <property type="protein sequence ID" value="FBpp0306754"/>
    <property type="gene ID" value="FBgn0040271"/>
</dbReference>
<dbReference type="EnsemblMetazoa" id="FBtr0334700">
    <property type="protein sequence ID" value="FBpp0306755"/>
    <property type="gene ID" value="FBgn0040271"/>
</dbReference>
<dbReference type="GeneID" id="53437"/>
<dbReference type="KEGG" id="dme:Dmel_CG6725"/>
<dbReference type="UCSC" id="CG6725-RA">
    <property type="organism name" value="d. melanogaster"/>
</dbReference>
<dbReference type="AGR" id="FB:FBgn0040271"/>
<dbReference type="CTD" id="23213"/>
<dbReference type="FlyBase" id="FBgn0040271">
    <property type="gene designation" value="Sulf1"/>
</dbReference>
<dbReference type="VEuPathDB" id="VectorBase:FBgn0040271"/>
<dbReference type="eggNOG" id="KOG3731">
    <property type="taxonomic scope" value="Eukaryota"/>
</dbReference>
<dbReference type="GeneTree" id="ENSGT00940000169254"/>
<dbReference type="HOGENOM" id="CLU_006332_2_1_1"/>
<dbReference type="InParanoid" id="Q9VEX0"/>
<dbReference type="OMA" id="VETPPQM"/>
<dbReference type="OrthoDB" id="96314at2759"/>
<dbReference type="PhylomeDB" id="Q9VEX0"/>
<dbReference type="BioGRID-ORCS" id="53437">
    <property type="hits" value="0 hits in 3 CRISPR screens"/>
</dbReference>
<dbReference type="GenomeRNAi" id="53437"/>
<dbReference type="PRO" id="PR:Q9VEX0"/>
<dbReference type="Proteomes" id="UP000000803">
    <property type="component" value="Chromosome 3R"/>
</dbReference>
<dbReference type="Bgee" id="FBgn0040271">
    <property type="expression patterns" value="Expressed in adult oenocyte (Drosophila) in adult thorax and 189 other cell types or tissues"/>
</dbReference>
<dbReference type="ExpressionAtlas" id="Q9VEX0">
    <property type="expression patterns" value="baseline and differential"/>
</dbReference>
<dbReference type="GO" id="GO:0009986">
    <property type="term" value="C:cell surface"/>
    <property type="evidence" value="ECO:0007669"/>
    <property type="project" value="UniProtKB-SubCell"/>
</dbReference>
<dbReference type="GO" id="GO:0005783">
    <property type="term" value="C:endoplasmic reticulum"/>
    <property type="evidence" value="ECO:0007669"/>
    <property type="project" value="UniProtKB-SubCell"/>
</dbReference>
<dbReference type="GO" id="GO:0005615">
    <property type="term" value="C:extracellular space"/>
    <property type="evidence" value="ECO:0000314"/>
    <property type="project" value="FlyBase"/>
</dbReference>
<dbReference type="GO" id="GO:0005795">
    <property type="term" value="C:Golgi stack"/>
    <property type="evidence" value="ECO:0007669"/>
    <property type="project" value="UniProtKB-SubCell"/>
</dbReference>
<dbReference type="GO" id="GO:0005539">
    <property type="term" value="F:glycosaminoglycan binding"/>
    <property type="evidence" value="ECO:0000318"/>
    <property type="project" value="GO_Central"/>
</dbReference>
<dbReference type="GO" id="GO:0046872">
    <property type="term" value="F:metal ion binding"/>
    <property type="evidence" value="ECO:0007669"/>
    <property type="project" value="UniProtKB-KW"/>
</dbReference>
<dbReference type="GO" id="GO:0008449">
    <property type="term" value="F:N-acetylglucosamine-6-sulfatase activity"/>
    <property type="evidence" value="ECO:0000315"/>
    <property type="project" value="FlyBase"/>
</dbReference>
<dbReference type="GO" id="GO:0015012">
    <property type="term" value="P:heparan sulfate proteoglycan biosynthetic process"/>
    <property type="evidence" value="ECO:0000315"/>
    <property type="project" value="FlyBase"/>
</dbReference>
<dbReference type="GO" id="GO:0008045">
    <property type="term" value="P:motor neuron axon guidance"/>
    <property type="evidence" value="ECO:0000315"/>
    <property type="project" value="FlyBase"/>
</dbReference>
<dbReference type="GO" id="GO:0090090">
    <property type="term" value="P:negative regulation of canonical Wnt signaling pathway"/>
    <property type="evidence" value="ECO:0000315"/>
    <property type="project" value="FlyBase"/>
</dbReference>
<dbReference type="GO" id="GO:0042059">
    <property type="term" value="P:negative regulation of epidermal growth factor receptor signaling pathway"/>
    <property type="evidence" value="ECO:0000316"/>
    <property type="project" value="FlyBase"/>
</dbReference>
<dbReference type="GO" id="GO:0045879">
    <property type="term" value="P:negative regulation of smoothened signaling pathway"/>
    <property type="evidence" value="ECO:0000315"/>
    <property type="project" value="FlyBase"/>
</dbReference>
<dbReference type="GO" id="GO:0045880">
    <property type="term" value="P:positive regulation of smoothened signaling pathway"/>
    <property type="evidence" value="ECO:0000315"/>
    <property type="project" value="FlyBase"/>
</dbReference>
<dbReference type="GO" id="GO:0016201">
    <property type="term" value="P:synaptic target inhibition"/>
    <property type="evidence" value="ECO:0000315"/>
    <property type="project" value="FlyBase"/>
</dbReference>
<dbReference type="GO" id="GO:0048100">
    <property type="term" value="P:wing disc anterior/posterior pattern formation"/>
    <property type="evidence" value="ECO:0000315"/>
    <property type="project" value="FlyBase"/>
</dbReference>
<dbReference type="GO" id="GO:0048190">
    <property type="term" value="P:wing disc dorsal/ventral pattern formation"/>
    <property type="evidence" value="ECO:0000315"/>
    <property type="project" value="FlyBase"/>
</dbReference>
<dbReference type="CDD" id="cd16147">
    <property type="entry name" value="G6S"/>
    <property type="match status" value="1"/>
</dbReference>
<dbReference type="FunFam" id="3.40.720.10:FF:000050">
    <property type="entry name" value="Extracellular sulfatase SULF-1"/>
    <property type="match status" value="1"/>
</dbReference>
<dbReference type="Gene3D" id="3.40.720.10">
    <property type="entry name" value="Alkaline Phosphatase, subunit A"/>
    <property type="match status" value="1"/>
</dbReference>
<dbReference type="InterPro" id="IPR017850">
    <property type="entry name" value="Alkaline_phosphatase_core_sf"/>
</dbReference>
<dbReference type="InterPro" id="IPR024609">
    <property type="entry name" value="Extracellular_sulfatase_C"/>
</dbReference>
<dbReference type="InterPro" id="IPR024607">
    <property type="entry name" value="Sulfatase_CS"/>
</dbReference>
<dbReference type="InterPro" id="IPR000917">
    <property type="entry name" value="Sulfatase_N"/>
</dbReference>
<dbReference type="PANTHER" id="PTHR43108:SF16">
    <property type="entry name" value="EXTRACELLULAR SULFATASE SULF-1 HOMOLOG"/>
    <property type="match status" value="1"/>
</dbReference>
<dbReference type="PANTHER" id="PTHR43108">
    <property type="entry name" value="N-ACETYLGLUCOSAMINE-6-SULFATASE FAMILY MEMBER"/>
    <property type="match status" value="1"/>
</dbReference>
<dbReference type="Pfam" id="PF12548">
    <property type="entry name" value="DUF3740"/>
    <property type="match status" value="1"/>
</dbReference>
<dbReference type="Pfam" id="PF00884">
    <property type="entry name" value="Sulfatase"/>
    <property type="match status" value="1"/>
</dbReference>
<dbReference type="SUPFAM" id="SSF53649">
    <property type="entry name" value="Alkaline phosphatase-like"/>
    <property type="match status" value="2"/>
</dbReference>
<dbReference type="PROSITE" id="PS00523">
    <property type="entry name" value="SULFATASE_1"/>
    <property type="match status" value="1"/>
</dbReference>
<accession>Q9VEX0</accession>
<accession>Q8MRG1</accession>
<accession>Q9NIH6</accession>
<protein>
    <recommendedName>
        <fullName>Extracellular sulfatase SULF-1 homolog</fullName>
        <shortName>DmSulf-1</shortName>
        <ecNumber>3.1.6.-</ecNumber>
    </recommendedName>
</protein>
<gene>
    <name type="primary">Sulf1</name>
    <name type="ORF">CG6725</name>
</gene>
<evidence type="ECO:0000250" key="1"/>
<evidence type="ECO:0000250" key="2">
    <source>
        <dbReference type="UniProtKB" id="P15289"/>
    </source>
</evidence>
<evidence type="ECO:0000255" key="3"/>
<evidence type="ECO:0000256" key="4">
    <source>
        <dbReference type="SAM" id="MobiDB-lite"/>
    </source>
</evidence>
<evidence type="ECO:0000269" key="5">
    <source>
    </source>
</evidence>
<evidence type="ECO:0000305" key="6"/>
<proteinExistence type="evidence at protein level"/>
<sequence length="1114" mass="127303">MMRHSSLRLIIGGLILLLFVLNVFSKEQGSHSHKRSHSAKRFSRDSNSARERRPNIILILTDDQDVELGSLNFMPRTLRLLRDGGAEFRHAYTTTPMCCPARSSLLTGMYVHNHMVFTNNDNCSSPQWQATHETRSYATYLSNAGYRTGYFGKYLNKYNGSYIPPGWREWGGLIMNSKYYNYSINLNGQKIKHGFDYAKDYYPDLIANDSIAFLRSSKQQNQRKPVLLTMSFPAPHGPEDSAPQYSHLFFNVTTHHTPSYDHAPNPDKQWILRVTEPMQPVHKRFTNLLMTKRLQTLQSVDVAVERVYNELKELGELDNTYIVYTSDHGYHLGQFGLIKGKSFPFEFDVRVPFLIRGPGIQASKVVNEIVLNVDLAPTFLDMGGVPTPQHMDGRSILPLLLSRNRAVRDNWPDSFLIESSGRRETAEQIAESRARLQIERRNMKLANSSLLEDFLEGAGESTTIVSSSSTAATLMSSTAQQPEDGEEEVETDNEEDDVDGDGAMDSSAAALEEDDLDDAAFEEGDEELDQEFQQNNDLPLAPYITKMMRLNSECSDPALLKNCLPGQKWKCVNEEGRWRKHKCKFHLQLEHQLAAMPRKQYQRNCACFTPDGVVYTKIRAPSAGLHRVNKRTHNGPGRRRNKREVFHTELPDEMEELLDLHQVVDQLVDHTHRSKRDLPASSNETIAQVIQQIQSTLEILELKFNEHELHASNSSGNSYERGEKYTKSGGHRCFVDATTAKVNCSNVIYDDEKTWRTSRTQIDMLIKLLKDKIGKLKEMKKQLRESNKQALAAGRRNDNRRRNDQSVLDSGAGPEFNMSYFTEISSTPRSNVVGQTEVFQGYGSASAFDSLEQTQSHRFTPRAECYCEPDVGENHADSKEMAREARRKLKEERQRKKERKRIKKARLEKECLSEKMNCFSHDNQHWRTAPLWNDSPFCFCMNANNNTYSCLRTINGTHNFLYCEFTTGLITFYNLTIDRFETINRAAGLTPGERSHMHDALDQLKSCRGRSCSIRRHQNHLEGGSSAPLLPINQVHRNNKRKHSPLAGAVGNYAFVGPRLDMEALPPIKRRKLSKYNRLTGSQQSHMKRRPWKQTPLQQSPRFLRTHSVTPAQA</sequence>
<reference key="1">
    <citation type="journal article" date="2000" name="Science">
        <title>The genome sequence of Drosophila melanogaster.</title>
        <authorList>
            <person name="Adams M.D."/>
            <person name="Celniker S.E."/>
            <person name="Holt R.A."/>
            <person name="Evans C.A."/>
            <person name="Gocayne J.D."/>
            <person name="Amanatides P.G."/>
            <person name="Scherer S.E."/>
            <person name="Li P.W."/>
            <person name="Hoskins R.A."/>
            <person name="Galle R.F."/>
            <person name="George R.A."/>
            <person name="Lewis S.E."/>
            <person name="Richards S."/>
            <person name="Ashburner M."/>
            <person name="Henderson S.N."/>
            <person name="Sutton G.G."/>
            <person name="Wortman J.R."/>
            <person name="Yandell M.D."/>
            <person name="Zhang Q."/>
            <person name="Chen L.X."/>
            <person name="Brandon R.C."/>
            <person name="Rogers Y.-H.C."/>
            <person name="Blazej R.G."/>
            <person name="Champe M."/>
            <person name="Pfeiffer B.D."/>
            <person name="Wan K.H."/>
            <person name="Doyle C."/>
            <person name="Baxter E.G."/>
            <person name="Helt G."/>
            <person name="Nelson C.R."/>
            <person name="Miklos G.L.G."/>
            <person name="Abril J.F."/>
            <person name="Agbayani A."/>
            <person name="An H.-J."/>
            <person name="Andrews-Pfannkoch C."/>
            <person name="Baldwin D."/>
            <person name="Ballew R.M."/>
            <person name="Basu A."/>
            <person name="Baxendale J."/>
            <person name="Bayraktaroglu L."/>
            <person name="Beasley E.M."/>
            <person name="Beeson K.Y."/>
            <person name="Benos P.V."/>
            <person name="Berman B.P."/>
            <person name="Bhandari D."/>
            <person name="Bolshakov S."/>
            <person name="Borkova D."/>
            <person name="Botchan M.R."/>
            <person name="Bouck J."/>
            <person name="Brokstein P."/>
            <person name="Brottier P."/>
            <person name="Burtis K.C."/>
            <person name="Busam D.A."/>
            <person name="Butler H."/>
            <person name="Cadieu E."/>
            <person name="Center A."/>
            <person name="Chandra I."/>
            <person name="Cherry J.M."/>
            <person name="Cawley S."/>
            <person name="Dahlke C."/>
            <person name="Davenport L.B."/>
            <person name="Davies P."/>
            <person name="de Pablos B."/>
            <person name="Delcher A."/>
            <person name="Deng Z."/>
            <person name="Mays A.D."/>
            <person name="Dew I."/>
            <person name="Dietz S.M."/>
            <person name="Dodson K."/>
            <person name="Doup L.E."/>
            <person name="Downes M."/>
            <person name="Dugan-Rocha S."/>
            <person name="Dunkov B.C."/>
            <person name="Dunn P."/>
            <person name="Durbin K.J."/>
            <person name="Evangelista C.C."/>
            <person name="Ferraz C."/>
            <person name="Ferriera S."/>
            <person name="Fleischmann W."/>
            <person name="Fosler C."/>
            <person name="Gabrielian A.E."/>
            <person name="Garg N.S."/>
            <person name="Gelbart W.M."/>
            <person name="Glasser K."/>
            <person name="Glodek A."/>
            <person name="Gong F."/>
            <person name="Gorrell J.H."/>
            <person name="Gu Z."/>
            <person name="Guan P."/>
            <person name="Harris M."/>
            <person name="Harris N.L."/>
            <person name="Harvey D.A."/>
            <person name="Heiman T.J."/>
            <person name="Hernandez J.R."/>
            <person name="Houck J."/>
            <person name="Hostin D."/>
            <person name="Houston K.A."/>
            <person name="Howland T.J."/>
            <person name="Wei M.-H."/>
            <person name="Ibegwam C."/>
            <person name="Jalali M."/>
            <person name="Kalush F."/>
            <person name="Karpen G.H."/>
            <person name="Ke Z."/>
            <person name="Kennison J.A."/>
            <person name="Ketchum K.A."/>
            <person name="Kimmel B.E."/>
            <person name="Kodira C.D."/>
            <person name="Kraft C.L."/>
            <person name="Kravitz S."/>
            <person name="Kulp D."/>
            <person name="Lai Z."/>
            <person name="Lasko P."/>
            <person name="Lei Y."/>
            <person name="Levitsky A.A."/>
            <person name="Li J.H."/>
            <person name="Li Z."/>
            <person name="Liang Y."/>
            <person name="Lin X."/>
            <person name="Liu X."/>
            <person name="Mattei B."/>
            <person name="McIntosh T.C."/>
            <person name="McLeod M.P."/>
            <person name="McPherson D."/>
            <person name="Merkulov G."/>
            <person name="Milshina N.V."/>
            <person name="Mobarry C."/>
            <person name="Morris J."/>
            <person name="Moshrefi A."/>
            <person name="Mount S.M."/>
            <person name="Moy M."/>
            <person name="Murphy B."/>
            <person name="Murphy L."/>
            <person name="Muzny D.M."/>
            <person name="Nelson D.L."/>
            <person name="Nelson D.R."/>
            <person name="Nelson K.A."/>
            <person name="Nixon K."/>
            <person name="Nusskern D.R."/>
            <person name="Pacleb J.M."/>
            <person name="Palazzolo M."/>
            <person name="Pittman G.S."/>
            <person name="Pan S."/>
            <person name="Pollard J."/>
            <person name="Puri V."/>
            <person name="Reese M.G."/>
            <person name="Reinert K."/>
            <person name="Remington K."/>
            <person name="Saunders R.D.C."/>
            <person name="Scheeler F."/>
            <person name="Shen H."/>
            <person name="Shue B.C."/>
            <person name="Siden-Kiamos I."/>
            <person name="Simpson M."/>
            <person name="Skupski M.P."/>
            <person name="Smith T.J."/>
            <person name="Spier E."/>
            <person name="Spradling A.C."/>
            <person name="Stapleton M."/>
            <person name="Strong R."/>
            <person name="Sun E."/>
            <person name="Svirskas R."/>
            <person name="Tector C."/>
            <person name="Turner R."/>
            <person name="Venter E."/>
            <person name="Wang A.H."/>
            <person name="Wang X."/>
            <person name="Wang Z.-Y."/>
            <person name="Wassarman D.A."/>
            <person name="Weinstock G.M."/>
            <person name="Weissenbach J."/>
            <person name="Williams S.M."/>
            <person name="Woodage T."/>
            <person name="Worley K.C."/>
            <person name="Wu D."/>
            <person name="Yang S."/>
            <person name="Yao Q.A."/>
            <person name="Ye J."/>
            <person name="Yeh R.-F."/>
            <person name="Zaveri J.S."/>
            <person name="Zhan M."/>
            <person name="Zhang G."/>
            <person name="Zhao Q."/>
            <person name="Zheng L."/>
            <person name="Zheng X.H."/>
            <person name="Zhong F.N."/>
            <person name="Zhong W."/>
            <person name="Zhou X."/>
            <person name="Zhu S.C."/>
            <person name="Zhu X."/>
            <person name="Smith H.O."/>
            <person name="Gibbs R.A."/>
            <person name="Myers E.W."/>
            <person name="Rubin G.M."/>
            <person name="Venter J.C."/>
        </authorList>
    </citation>
    <scope>NUCLEOTIDE SEQUENCE [LARGE SCALE GENOMIC DNA]</scope>
    <source>
        <strain>Berkeley</strain>
    </source>
</reference>
<reference key="2">
    <citation type="journal article" date="2002" name="Genome Biol.">
        <title>Annotation of the Drosophila melanogaster euchromatic genome: a systematic review.</title>
        <authorList>
            <person name="Misra S."/>
            <person name="Crosby M.A."/>
            <person name="Mungall C.J."/>
            <person name="Matthews B.B."/>
            <person name="Campbell K.S."/>
            <person name="Hradecky P."/>
            <person name="Huang Y."/>
            <person name="Kaminker J.S."/>
            <person name="Millburn G.H."/>
            <person name="Prochnik S.E."/>
            <person name="Smith C.D."/>
            <person name="Tupy J.L."/>
            <person name="Whitfield E.J."/>
            <person name="Bayraktaroglu L."/>
            <person name="Berman B.P."/>
            <person name="Bettencourt B.R."/>
            <person name="Celniker S.E."/>
            <person name="de Grey A.D.N.J."/>
            <person name="Drysdale R.A."/>
            <person name="Harris N.L."/>
            <person name="Richter J."/>
            <person name="Russo S."/>
            <person name="Schroeder A.J."/>
            <person name="Shu S.Q."/>
            <person name="Stapleton M."/>
            <person name="Yamada C."/>
            <person name="Ashburner M."/>
            <person name="Gelbart W.M."/>
            <person name="Rubin G.M."/>
            <person name="Lewis S.E."/>
        </authorList>
    </citation>
    <scope>GENOME REANNOTATION</scope>
    <source>
        <strain>Berkeley</strain>
    </source>
</reference>
<reference key="3">
    <citation type="journal article" date="2002" name="Genome Biol.">
        <title>A Drosophila full-length cDNA resource.</title>
        <authorList>
            <person name="Stapleton M."/>
            <person name="Carlson J.W."/>
            <person name="Brokstein P."/>
            <person name="Yu C."/>
            <person name="Champe M."/>
            <person name="George R.A."/>
            <person name="Guarin H."/>
            <person name="Kronmiller B."/>
            <person name="Pacleb J.M."/>
            <person name="Park S."/>
            <person name="Wan K.H."/>
            <person name="Rubin G.M."/>
            <person name="Celniker S.E."/>
        </authorList>
    </citation>
    <scope>NUCLEOTIDE SEQUENCE [LARGE SCALE MRNA]</scope>
    <source>
        <strain>Berkeley</strain>
        <tissue>Embryo</tissue>
    </source>
</reference>
<reference key="4">
    <citation type="submission" date="1999-12" db="EMBL/GenBank/DDBJ databases">
        <title>Analysis of Drosophila melanogaster Sulf1 during development.</title>
        <authorList>
            <person name="Standiford D.M."/>
            <person name="Emerson C.P. Jr."/>
        </authorList>
    </citation>
    <scope>NUCLEOTIDE SEQUENCE OF 104-1087</scope>
</reference>
<reference key="5">
    <citation type="journal article" date="2007" name="Glycobiology">
        <title>Identification of N-glycosylated proteins from the central nervous system of Drosophila melanogaster.</title>
        <authorList>
            <person name="Koles K."/>
            <person name="Lim J.-M."/>
            <person name="Aoki K."/>
            <person name="Porterfield M."/>
            <person name="Tiemeyer M."/>
            <person name="Wells L."/>
            <person name="Panin V."/>
        </authorList>
    </citation>
    <scope>GLYCOSYLATION [LARGE SCALE ANALYSIS] AT ASN-743</scope>
    <scope>IDENTIFICATION BY MASS SPECTROMETRY</scope>
    <source>
        <strain>Oregon-R</strain>
        <tissue>Head</tissue>
    </source>
</reference>
<organism>
    <name type="scientific">Drosophila melanogaster</name>
    <name type="common">Fruit fly</name>
    <dbReference type="NCBI Taxonomy" id="7227"/>
    <lineage>
        <taxon>Eukaryota</taxon>
        <taxon>Metazoa</taxon>
        <taxon>Ecdysozoa</taxon>
        <taxon>Arthropoda</taxon>
        <taxon>Hexapoda</taxon>
        <taxon>Insecta</taxon>
        <taxon>Pterygota</taxon>
        <taxon>Neoptera</taxon>
        <taxon>Endopterygota</taxon>
        <taxon>Diptera</taxon>
        <taxon>Brachycera</taxon>
        <taxon>Muscomorpha</taxon>
        <taxon>Ephydroidea</taxon>
        <taxon>Drosophilidae</taxon>
        <taxon>Drosophila</taxon>
        <taxon>Sophophora</taxon>
    </lineage>
</organism>
<comment type="cofactor">
    <cofactor evidence="1">
        <name>Ca(2+)</name>
        <dbReference type="ChEBI" id="CHEBI:29108"/>
    </cofactor>
    <text evidence="1">Binds 1 Ca(2+) ion per subunit.</text>
</comment>
<comment type="subcellular location">
    <subcellularLocation>
        <location evidence="1">Endoplasmic reticulum</location>
    </subcellularLocation>
    <subcellularLocation>
        <location evidence="1">Golgi apparatus</location>
        <location evidence="1">Golgi stack</location>
    </subcellularLocation>
    <subcellularLocation>
        <location evidence="1">Cell surface</location>
    </subcellularLocation>
    <text evidence="1">Also localized on the cell surface.</text>
</comment>
<comment type="PTM">
    <text evidence="1">The conversion to 3-oxoalanine (also known as C-formylglycine, FGly), of a serine or cysteine residue in prokaryotes and of a cysteine residue in eukaryotes, is critical for catalytic activity.</text>
</comment>
<comment type="similarity">
    <text evidence="6">Belongs to the sulfatase family.</text>
</comment>
<comment type="sequence caution" evidence="6">
    <conflict type="frameshift">
        <sequence resource="EMBL-CDS" id="AAF32278"/>
    </conflict>
</comment>
<comment type="sequence caution" evidence="6">
    <conflict type="erroneous initiation">
        <sequence resource="EMBL-CDS" id="AAM50312"/>
    </conflict>
</comment>
<keyword id="KW-0106">Calcium</keyword>
<keyword id="KW-0256">Endoplasmic reticulum</keyword>
<keyword id="KW-0325">Glycoprotein</keyword>
<keyword id="KW-0333">Golgi apparatus</keyword>
<keyword id="KW-0378">Hydrolase</keyword>
<keyword id="KW-0479">Metal-binding</keyword>
<keyword id="KW-1185">Reference proteome</keyword>
<keyword id="KW-0732">Signal</keyword>